<evidence type="ECO:0000255" key="1">
    <source>
        <dbReference type="PROSITE-ProRule" id="PRU00037"/>
    </source>
</evidence>
<evidence type="ECO:0000255" key="2">
    <source>
        <dbReference type="PROSITE-ProRule" id="PRU00042"/>
    </source>
</evidence>
<evidence type="ECO:0000256" key="3">
    <source>
        <dbReference type="SAM" id="MobiDB-lite"/>
    </source>
</evidence>
<evidence type="ECO:0000305" key="4"/>
<evidence type="ECO:0007744" key="5">
    <source>
    </source>
</evidence>
<feature type="chain" id="PRO_0000047739" description="Zinc finger and BTB domain-containing protein 26">
    <location>
        <begin position="1"/>
        <end position="441"/>
    </location>
</feature>
<feature type="domain" description="BTB" evidence="1">
    <location>
        <begin position="33"/>
        <end position="97"/>
    </location>
</feature>
<feature type="zinc finger region" description="C2H2-type 1" evidence="2">
    <location>
        <begin position="273"/>
        <end position="295"/>
    </location>
</feature>
<feature type="zinc finger region" description="C2H2-type 2" evidence="2">
    <location>
        <begin position="298"/>
        <end position="320"/>
    </location>
</feature>
<feature type="zinc finger region" description="C2H2-type 3" evidence="2">
    <location>
        <begin position="326"/>
        <end position="348"/>
    </location>
</feature>
<feature type="zinc finger region" description="C2H2-type 4" evidence="2">
    <location>
        <begin position="354"/>
        <end position="377"/>
    </location>
</feature>
<feature type="region of interest" description="Disordered" evidence="3">
    <location>
        <begin position="134"/>
        <end position="177"/>
    </location>
</feature>
<feature type="region of interest" description="Disordered" evidence="3">
    <location>
        <begin position="194"/>
        <end position="216"/>
    </location>
</feature>
<feature type="compositionally biased region" description="Polar residues" evidence="3">
    <location>
        <begin position="201"/>
        <end position="216"/>
    </location>
</feature>
<feature type="cross-link" description="Glycyl lysine isopeptide (Lys-Gly) (interchain with G-Cter in SUMO2)" evidence="5">
    <location>
        <position position="184"/>
    </location>
</feature>
<feature type="cross-link" description="Glycyl lysine isopeptide (Lys-Gly) (interchain with G-Cter in SUMO2)" evidence="5">
    <location>
        <position position="255"/>
    </location>
</feature>
<feature type="cross-link" description="Glycyl lysine isopeptide (Lys-Gly) (interchain with G-Cter in SUMO2)" evidence="5">
    <location>
        <position position="329"/>
    </location>
</feature>
<feature type="sequence variant" id="VAR_052916" description="In dbSNP:rs7856488.">
    <original>H</original>
    <variation>R</variation>
    <location>
        <position position="236"/>
    </location>
</feature>
<proteinExistence type="evidence at protein level"/>
<organism>
    <name type="scientific">Homo sapiens</name>
    <name type="common">Human</name>
    <dbReference type="NCBI Taxonomy" id="9606"/>
    <lineage>
        <taxon>Eukaryota</taxon>
        <taxon>Metazoa</taxon>
        <taxon>Chordata</taxon>
        <taxon>Craniata</taxon>
        <taxon>Vertebrata</taxon>
        <taxon>Euteleostomi</taxon>
        <taxon>Mammalia</taxon>
        <taxon>Eutheria</taxon>
        <taxon>Euarchontoglires</taxon>
        <taxon>Primates</taxon>
        <taxon>Haplorrhini</taxon>
        <taxon>Catarrhini</taxon>
        <taxon>Hominidae</taxon>
        <taxon>Homo</taxon>
    </lineage>
</organism>
<accession>Q9HCK0</accession>
<accession>B3KQ53</accession>
<accession>Q8WTR1</accession>
<reference key="1">
    <citation type="submission" date="2000-11" db="EMBL/GenBank/DDBJ databases">
        <title>Bioref, a novel bioregulating factor ubiquitously expressed.</title>
        <authorList>
            <person name="Alliel P.M."/>
            <person name="Goudou D."/>
            <person name="Seddiqi N."/>
            <person name="Rieger F."/>
            <person name="Perin J.-P."/>
        </authorList>
    </citation>
    <scope>NUCLEOTIDE SEQUENCE [MRNA]</scope>
    <source>
        <tissue>Brain</tissue>
    </source>
</reference>
<reference key="2">
    <citation type="journal article" date="2000" name="DNA Res.">
        <title>Prediction of the coding sequences of unidentified human genes. XVIII. The complete sequences of 100 new cDNA clones from brain which code for large proteins in vitro.</title>
        <authorList>
            <person name="Nagase T."/>
            <person name="Kikuno R."/>
            <person name="Nakayama M."/>
            <person name="Hirosawa M."/>
            <person name="Ohara O."/>
        </authorList>
    </citation>
    <scope>NUCLEOTIDE SEQUENCE [LARGE SCALE MRNA]</scope>
    <source>
        <tissue>Brain</tissue>
    </source>
</reference>
<reference key="3">
    <citation type="journal article" date="2004" name="Nat. Genet.">
        <title>Complete sequencing and characterization of 21,243 full-length human cDNAs.</title>
        <authorList>
            <person name="Ota T."/>
            <person name="Suzuki Y."/>
            <person name="Nishikawa T."/>
            <person name="Otsuki T."/>
            <person name="Sugiyama T."/>
            <person name="Irie R."/>
            <person name="Wakamatsu A."/>
            <person name="Hayashi K."/>
            <person name="Sato H."/>
            <person name="Nagai K."/>
            <person name="Kimura K."/>
            <person name="Makita H."/>
            <person name="Sekine M."/>
            <person name="Obayashi M."/>
            <person name="Nishi T."/>
            <person name="Shibahara T."/>
            <person name="Tanaka T."/>
            <person name="Ishii S."/>
            <person name="Yamamoto J."/>
            <person name="Saito K."/>
            <person name="Kawai Y."/>
            <person name="Isono Y."/>
            <person name="Nakamura Y."/>
            <person name="Nagahari K."/>
            <person name="Murakami K."/>
            <person name="Yasuda T."/>
            <person name="Iwayanagi T."/>
            <person name="Wagatsuma M."/>
            <person name="Shiratori A."/>
            <person name="Sudo H."/>
            <person name="Hosoiri T."/>
            <person name="Kaku Y."/>
            <person name="Kodaira H."/>
            <person name="Kondo H."/>
            <person name="Sugawara M."/>
            <person name="Takahashi M."/>
            <person name="Kanda K."/>
            <person name="Yokoi T."/>
            <person name="Furuya T."/>
            <person name="Kikkawa E."/>
            <person name="Omura Y."/>
            <person name="Abe K."/>
            <person name="Kamihara K."/>
            <person name="Katsuta N."/>
            <person name="Sato K."/>
            <person name="Tanikawa M."/>
            <person name="Yamazaki M."/>
            <person name="Ninomiya K."/>
            <person name="Ishibashi T."/>
            <person name="Yamashita H."/>
            <person name="Murakawa K."/>
            <person name="Fujimori K."/>
            <person name="Tanai H."/>
            <person name="Kimata M."/>
            <person name="Watanabe M."/>
            <person name="Hiraoka S."/>
            <person name="Chiba Y."/>
            <person name="Ishida S."/>
            <person name="Ono Y."/>
            <person name="Takiguchi S."/>
            <person name="Watanabe S."/>
            <person name="Yosida M."/>
            <person name="Hotuta T."/>
            <person name="Kusano J."/>
            <person name="Kanehori K."/>
            <person name="Takahashi-Fujii A."/>
            <person name="Hara H."/>
            <person name="Tanase T.-O."/>
            <person name="Nomura Y."/>
            <person name="Togiya S."/>
            <person name="Komai F."/>
            <person name="Hara R."/>
            <person name="Takeuchi K."/>
            <person name="Arita M."/>
            <person name="Imose N."/>
            <person name="Musashino K."/>
            <person name="Yuuki H."/>
            <person name="Oshima A."/>
            <person name="Sasaki N."/>
            <person name="Aotsuka S."/>
            <person name="Yoshikawa Y."/>
            <person name="Matsunawa H."/>
            <person name="Ichihara T."/>
            <person name="Shiohata N."/>
            <person name="Sano S."/>
            <person name="Moriya S."/>
            <person name="Momiyama H."/>
            <person name="Satoh N."/>
            <person name="Takami S."/>
            <person name="Terashima Y."/>
            <person name="Suzuki O."/>
            <person name="Nakagawa S."/>
            <person name="Senoh A."/>
            <person name="Mizoguchi H."/>
            <person name="Goto Y."/>
            <person name="Shimizu F."/>
            <person name="Wakebe H."/>
            <person name="Hishigaki H."/>
            <person name="Watanabe T."/>
            <person name="Sugiyama A."/>
            <person name="Takemoto M."/>
            <person name="Kawakami B."/>
            <person name="Yamazaki M."/>
            <person name="Watanabe K."/>
            <person name="Kumagai A."/>
            <person name="Itakura S."/>
            <person name="Fukuzumi Y."/>
            <person name="Fujimori Y."/>
            <person name="Komiyama M."/>
            <person name="Tashiro H."/>
            <person name="Tanigami A."/>
            <person name="Fujiwara T."/>
            <person name="Ono T."/>
            <person name="Yamada K."/>
            <person name="Fujii Y."/>
            <person name="Ozaki K."/>
            <person name="Hirao M."/>
            <person name="Ohmori Y."/>
            <person name="Kawabata A."/>
            <person name="Hikiji T."/>
            <person name="Kobatake N."/>
            <person name="Inagaki H."/>
            <person name="Ikema Y."/>
            <person name="Okamoto S."/>
            <person name="Okitani R."/>
            <person name="Kawakami T."/>
            <person name="Noguchi S."/>
            <person name="Itoh T."/>
            <person name="Shigeta K."/>
            <person name="Senba T."/>
            <person name="Matsumura K."/>
            <person name="Nakajima Y."/>
            <person name="Mizuno T."/>
            <person name="Morinaga M."/>
            <person name="Sasaki M."/>
            <person name="Togashi T."/>
            <person name="Oyama M."/>
            <person name="Hata H."/>
            <person name="Watanabe M."/>
            <person name="Komatsu T."/>
            <person name="Mizushima-Sugano J."/>
            <person name="Satoh T."/>
            <person name="Shirai Y."/>
            <person name="Takahashi Y."/>
            <person name="Nakagawa K."/>
            <person name="Okumura K."/>
            <person name="Nagase T."/>
            <person name="Nomura N."/>
            <person name="Kikuchi H."/>
            <person name="Masuho Y."/>
            <person name="Yamashita R."/>
            <person name="Nakai K."/>
            <person name="Yada T."/>
            <person name="Nakamura Y."/>
            <person name="Ohara O."/>
            <person name="Isogai T."/>
            <person name="Sugano S."/>
        </authorList>
    </citation>
    <scope>NUCLEOTIDE SEQUENCE [LARGE SCALE MRNA]</scope>
    <source>
        <tissue>Testis</tissue>
    </source>
</reference>
<reference key="4">
    <citation type="journal article" date="2004" name="Genome Res.">
        <title>The status, quality, and expansion of the NIH full-length cDNA project: the Mammalian Gene Collection (MGC).</title>
        <authorList>
            <consortium name="The MGC Project Team"/>
        </authorList>
    </citation>
    <scope>NUCLEOTIDE SEQUENCE [LARGE SCALE MRNA]</scope>
    <source>
        <tissue>Uterus</tissue>
    </source>
</reference>
<reference key="5">
    <citation type="journal article" date="2017" name="Nat. Struct. Mol. Biol.">
        <title>Site-specific mapping of the human SUMO proteome reveals co-modification with phosphorylation.</title>
        <authorList>
            <person name="Hendriks I.A."/>
            <person name="Lyon D."/>
            <person name="Young C."/>
            <person name="Jensen L.J."/>
            <person name="Vertegaal A.C."/>
            <person name="Nielsen M.L."/>
        </authorList>
    </citation>
    <scope>SUMOYLATION [LARGE SCALE ANALYSIS] AT LYS-184; LYS-255 AND LYS-329</scope>
    <scope>IDENTIFICATION BY MASS SPECTROMETRY [LARGE SCALE ANALYSIS]</scope>
</reference>
<sequence length="441" mass="49953">MSERSDLLHFKFENYGDSMLQKMNKLREENKFCDVTVLIDDIEVQGHKIVFAAGSPFLRDQFLLNDSREVKISILQSSEVGRQLLLSCYSGVLEFPEMELVNYLTAASFLQMSHIVERCTQALWKFIKPKQPMDSKEGCEPQSASPQSKEQQGDARGSPKQDSPCIHPSEDSMDMEDSDIQIVKVESIGDVSEVRSKKDQNQFISSEPTALHSSEPQHSLINSTVENRVSEIEQNHLHNYALSYTGSDNIIMASKDVFGPNIRGVDKGLQWHHQCPKCTRVFRHLENYANHLKMHKLFMCLLCGKTFTQKGNLHRHMRVHAGIKPFQCKICGKTFSQKCSLQDHLNLHSGDKPHKCNYCDMVFAHKPVLRKHLKQLHGKNSFDNANERNVQDLTVDFDSFACTTVTDSKGCQPQPDATQVLDAGKLAQAVLNLRNDSTCVN</sequence>
<comment type="function">
    <text>May be involved in transcriptional regulation.</text>
</comment>
<comment type="interaction">
    <interactant intactId="EBI-3918996">
        <id>Q9HCK0</id>
    </interactant>
    <interactant intactId="EBI-710484">
        <id>O15169</id>
        <label>AXIN1</label>
    </interactant>
    <organismsDiffer>false</organismsDiffer>
    <experiments>3</experiments>
</comment>
<comment type="interaction">
    <interactant intactId="EBI-3918996">
        <id>Q9HCK0</id>
    </interactant>
    <interactant intactId="EBI-3866279">
        <id>Q9BWT7</id>
        <label>CARD10</label>
    </interactant>
    <organismsDiffer>false</organismsDiffer>
    <experiments>3</experiments>
</comment>
<comment type="interaction">
    <interactant intactId="EBI-3918996">
        <id>Q9HCK0</id>
    </interactant>
    <interactant intactId="EBI-295634">
        <id>Q16543</id>
        <label>CDC37</label>
    </interactant>
    <organismsDiffer>false</organismsDiffer>
    <experiments>3</experiments>
</comment>
<comment type="interaction">
    <interactant intactId="EBI-3918996">
        <id>Q9HCK0</id>
    </interactant>
    <interactant intactId="EBI-374980">
        <id>O00311</id>
        <label>CDC7</label>
    </interactant>
    <organismsDiffer>false</organismsDiffer>
    <experiments>3</experiments>
</comment>
<comment type="interaction">
    <interactant intactId="EBI-3918996">
        <id>Q9HCK0</id>
    </interactant>
    <interactant intactId="EBI-77321">
        <id>Q9UER7</id>
        <label>DAXX</label>
    </interactant>
    <organismsDiffer>false</organismsDiffer>
    <experiments>3</experiments>
</comment>
<comment type="interaction">
    <interactant intactId="EBI-3918996">
        <id>Q9HCK0</id>
    </interactant>
    <interactant intactId="EBI-739789">
        <id>Q92997</id>
        <label>DVL3</label>
    </interactant>
    <organismsDiffer>false</organismsDiffer>
    <experiments>3</experiments>
</comment>
<comment type="interaction">
    <interactant intactId="EBI-3918996">
        <id>Q9HCK0</id>
    </interactant>
    <interactant intactId="EBI-2339219">
        <id>Q08426</id>
        <label>EHHADH</label>
    </interactant>
    <organismsDiffer>false</organismsDiffer>
    <experiments>5</experiments>
</comment>
<comment type="interaction">
    <interactant intactId="EBI-3918996">
        <id>Q9HCK0</id>
    </interactant>
    <interactant intactId="EBI-1052570">
        <id>O95995</id>
        <label>GAS8</label>
    </interactant>
    <organismsDiffer>false</organismsDiffer>
    <experiments>5</experiments>
</comment>
<comment type="interaction">
    <interactant intactId="EBI-3918996">
        <id>Q9HCK0</id>
    </interactant>
    <interactant intactId="EBI-712067">
        <id>Q8TF65</id>
        <label>GIPC2</label>
    </interactant>
    <organismsDiffer>false</organismsDiffer>
    <experiments>3</experiments>
</comment>
<comment type="interaction">
    <interactant intactId="EBI-3918996">
        <id>Q9HCK0</id>
    </interactant>
    <interactant intactId="EBI-10330301">
        <id>V9HWH0</id>
        <label>HEL164</label>
    </interactant>
    <organismsDiffer>false</organismsDiffer>
    <experiments>3</experiments>
</comment>
<comment type="interaction">
    <interactant intactId="EBI-3918996">
        <id>Q9HCK0</id>
    </interactant>
    <interactant intactId="EBI-2549423">
        <id>Q6NT76</id>
        <label>HMBOX1</label>
    </interactant>
    <organismsDiffer>false</organismsDiffer>
    <experiments>3</experiments>
</comment>
<comment type="interaction">
    <interactant intactId="EBI-3918996">
        <id>Q9HCK0</id>
    </interactant>
    <interactant intactId="EBI-739909">
        <id>Q969R5</id>
        <label>L3MBTL2</label>
    </interactant>
    <organismsDiffer>false</organismsDiffer>
    <experiments>3</experiments>
</comment>
<comment type="interaction">
    <interactant intactId="EBI-3918996">
        <id>Q9HCK0</id>
    </interactant>
    <interactant intactId="EBI-739832">
        <id>Q8TBB1</id>
        <label>LNX1</label>
    </interactant>
    <organismsDiffer>false</organismsDiffer>
    <experiments>3</experiments>
</comment>
<comment type="interaction">
    <interactant intactId="EBI-3918996">
        <id>Q9HCK0</id>
    </interactant>
    <interactant intactId="EBI-10288852">
        <id>Q9UBU8-2</id>
        <label>MORF4L1</label>
    </interactant>
    <organismsDiffer>false</organismsDiffer>
    <experiments>3</experiments>
</comment>
<comment type="interaction">
    <interactant intactId="EBI-3918996">
        <id>Q9HCK0</id>
    </interactant>
    <interactant intactId="EBI-399257">
        <id>Q15014</id>
        <label>MORF4L2</label>
    </interactant>
    <organismsDiffer>false</organismsDiffer>
    <experiments>3</experiments>
</comment>
<comment type="interaction">
    <interactant intactId="EBI-3918996">
        <id>Q9HCK0</id>
    </interactant>
    <interactant intactId="EBI-368321">
        <id>O60437</id>
        <label>PPL</label>
    </interactant>
    <organismsDiffer>false</organismsDiffer>
    <experiments>3</experiments>
</comment>
<comment type="interaction">
    <interactant intactId="EBI-3918996">
        <id>Q9HCK0</id>
    </interactant>
    <interactant intactId="EBI-746453">
        <id>P54725</id>
        <label>RAD23A</label>
    </interactant>
    <organismsDiffer>false</organismsDiffer>
    <experiments>3</experiments>
</comment>
<comment type="interaction">
    <interactant intactId="EBI-3918996">
        <id>Q9HCK0</id>
    </interactant>
    <interactant intactId="EBI-948156">
        <id>Q9Y4B4</id>
        <label>RAD54L2</label>
    </interactant>
    <organismsDiffer>false</organismsDiffer>
    <experiments>3</experiments>
</comment>
<comment type="interaction">
    <interactant intactId="EBI-3918996">
        <id>Q9HCK0</id>
    </interactant>
    <interactant intactId="EBI-2340927">
        <id>P78317</id>
        <label>RNF4</label>
    </interactant>
    <organismsDiffer>false</organismsDiffer>
    <experiments>3</experiments>
</comment>
<comment type="interaction">
    <interactant intactId="EBI-3918996">
        <id>Q9HCK0</id>
    </interactant>
    <interactant intactId="EBI-11954419">
        <id>P35711-4</id>
        <label>SOX5</label>
    </interactant>
    <organismsDiffer>false</organismsDiffer>
    <experiments>3</experiments>
</comment>
<comment type="interaction">
    <interactant intactId="EBI-3918996">
        <id>Q9HCK0</id>
    </interactant>
    <interactant intactId="EBI-80140">
        <id>P63165</id>
        <label>SUMO1</label>
    </interactant>
    <organismsDiffer>false</organismsDiffer>
    <experiments>8</experiments>
</comment>
<comment type="interaction">
    <interactant intactId="EBI-3918996">
        <id>Q9HCK0</id>
    </interactant>
    <interactant intactId="EBI-10175576">
        <id>G2XKQ0</id>
        <label>SUMO1P1</label>
    </interactant>
    <organismsDiffer>false</organismsDiffer>
    <experiments>3</experiments>
</comment>
<comment type="interaction">
    <interactant intactId="EBI-3918996">
        <id>Q9HCK0</id>
    </interactant>
    <interactant intactId="EBI-3650647">
        <id>Q9BUZ4</id>
        <label>TRAF4</label>
    </interactant>
    <organismsDiffer>false</organismsDiffer>
    <experiments>3</experiments>
</comment>
<comment type="interaction">
    <interactant intactId="EBI-3918996">
        <id>Q9HCK0</id>
    </interactant>
    <interactant intactId="EBI-725997">
        <id>Q8WV44</id>
        <label>TRIM41</label>
    </interactant>
    <organismsDiffer>false</organismsDiffer>
    <experiments>5</experiments>
</comment>
<comment type="interaction">
    <interactant intactId="EBI-3918996">
        <id>Q9HCK0</id>
    </interactant>
    <interactant intactId="EBI-744794">
        <id>Q9BZW7</id>
        <label>TSGA10</label>
    </interactant>
    <organismsDiffer>false</organismsDiffer>
    <experiments>3</experiments>
</comment>
<comment type="interaction">
    <interactant intactId="EBI-3918996">
        <id>Q9HCK0</id>
    </interactant>
    <interactant intactId="EBI-80168">
        <id>P63279</id>
        <label>UBE2I</label>
    </interactant>
    <organismsDiffer>false</organismsDiffer>
    <experiments>3</experiments>
</comment>
<comment type="interaction">
    <interactant intactId="EBI-3918996">
        <id>Q9HCK0</id>
    </interactant>
    <interactant intactId="EBI-12377219">
        <id>Q9Y330</id>
        <label>ZBTB12</label>
    </interactant>
    <organismsDiffer>false</organismsDiffer>
    <experiments>3</experiments>
</comment>
<comment type="interaction">
    <interactant intactId="EBI-3918996">
        <id>Q9HCK0</id>
    </interactant>
    <interactant intactId="EBI-3918996">
        <id>Q9HCK0</id>
        <label>ZBTB26</label>
    </interactant>
    <organismsDiffer>false</organismsDiffer>
    <experiments>7</experiments>
</comment>
<comment type="interaction">
    <interactant intactId="EBI-3918996">
        <id>Q9HCK0</id>
    </interactant>
    <interactant intactId="EBI-11317716">
        <id>Q8NCN2</id>
        <label>ZBTB34</label>
    </interactant>
    <organismsDiffer>false</organismsDiffer>
    <experiments>3</experiments>
</comment>
<comment type="interaction">
    <interactant intactId="EBI-3918996">
        <id>Q9HCK0</id>
    </interactant>
    <interactant intactId="EBI-744864">
        <id>P10074</id>
        <label>ZBTB48</label>
    </interactant>
    <organismsDiffer>false</organismsDiffer>
    <experiments>3</experiments>
</comment>
<comment type="interaction">
    <interactant intactId="EBI-3918996">
        <id>Q9HCK0</id>
    </interactant>
    <interactant intactId="EBI-7227791">
        <id>Q15916</id>
        <label>ZBTB6</label>
    </interactant>
    <organismsDiffer>false</organismsDiffer>
    <experiments>6</experiments>
</comment>
<comment type="interaction">
    <interactant intactId="EBI-3918996">
        <id>Q9HCK0</id>
    </interactant>
    <interactant intactId="EBI-395708">
        <id>Q96C00</id>
        <label>ZBTB9</label>
    </interactant>
    <organismsDiffer>false</organismsDiffer>
    <experiments>3</experiments>
</comment>
<comment type="interaction">
    <interactant intactId="EBI-3918996">
        <id>Q9HCK0</id>
    </interactant>
    <interactant intactId="EBI-17634549">
        <id>Q9UJ78-2</id>
        <label>ZMYM5</label>
    </interactant>
    <organismsDiffer>false</organismsDiffer>
    <experiments>3</experiments>
</comment>
<comment type="interaction">
    <interactant intactId="EBI-3918996">
        <id>Q9HCK0</id>
    </interactant>
    <interactant intactId="EBI-347633">
        <id>Q9H9D4</id>
        <label>ZNF408</label>
    </interactant>
    <organismsDiffer>false</organismsDiffer>
    <experiments>3</experiments>
</comment>
<comment type="subcellular location">
    <subcellularLocation>
        <location evidence="4">Nucleus</location>
    </subcellularLocation>
</comment>
<comment type="tissue specificity">
    <text>Ubiquitous.</text>
</comment>
<comment type="sequence caution" evidence="4">
    <conflict type="erroneous initiation">
        <sequence resource="EMBL-CDS" id="BAB13398"/>
    </conflict>
</comment>
<dbReference type="EMBL" id="AF323460">
    <property type="protein sequence ID" value="AAL55969.1"/>
    <property type="molecule type" value="mRNA"/>
</dbReference>
<dbReference type="EMBL" id="AB046792">
    <property type="protein sequence ID" value="BAB13398.1"/>
    <property type="status" value="ALT_INIT"/>
    <property type="molecule type" value="mRNA"/>
</dbReference>
<dbReference type="EMBL" id="AK057445">
    <property type="protein sequence ID" value="BAG51915.1"/>
    <property type="molecule type" value="mRNA"/>
</dbReference>
<dbReference type="EMBL" id="BC018748">
    <property type="protein sequence ID" value="AAH18748.1"/>
    <property type="molecule type" value="mRNA"/>
</dbReference>
<dbReference type="CCDS" id="CCDS6847.1"/>
<dbReference type="RefSeq" id="NP_001291292.1">
    <property type="nucleotide sequence ID" value="NM_001304363.2"/>
</dbReference>
<dbReference type="RefSeq" id="NP_001291293.1">
    <property type="nucleotide sequence ID" value="NM_001304364.2"/>
</dbReference>
<dbReference type="RefSeq" id="NP_065975.1">
    <property type="nucleotide sequence ID" value="NM_020924.4"/>
</dbReference>
<dbReference type="SMR" id="Q9HCK0"/>
<dbReference type="BioGRID" id="121711">
    <property type="interactions" value="42"/>
</dbReference>
<dbReference type="FunCoup" id="Q9HCK0">
    <property type="interactions" value="316"/>
</dbReference>
<dbReference type="IntAct" id="Q9HCK0">
    <property type="interactions" value="36"/>
</dbReference>
<dbReference type="STRING" id="9606.ENSP00000362760"/>
<dbReference type="GlyGen" id="Q9HCK0">
    <property type="glycosylation" value="1 site, 1 O-linked glycan (1 site)"/>
</dbReference>
<dbReference type="iPTMnet" id="Q9HCK0"/>
<dbReference type="PhosphoSitePlus" id="Q9HCK0"/>
<dbReference type="BioMuta" id="ZBTB26"/>
<dbReference type="DMDM" id="20177845"/>
<dbReference type="jPOST" id="Q9HCK0"/>
<dbReference type="MassIVE" id="Q9HCK0"/>
<dbReference type="PaxDb" id="9606-ENSP00000362760"/>
<dbReference type="PeptideAtlas" id="Q9HCK0"/>
<dbReference type="ProteomicsDB" id="81742"/>
<dbReference type="Antibodypedia" id="16160">
    <property type="antibodies" value="153 antibodies from 17 providers"/>
</dbReference>
<dbReference type="DNASU" id="57684"/>
<dbReference type="Ensembl" id="ENST00000373654.1">
    <property type="protein sequence ID" value="ENSP00000362758.1"/>
    <property type="gene ID" value="ENSG00000171448.9"/>
</dbReference>
<dbReference type="Ensembl" id="ENST00000373656.4">
    <property type="protein sequence ID" value="ENSP00000362760.3"/>
    <property type="gene ID" value="ENSG00000171448.9"/>
</dbReference>
<dbReference type="GeneID" id="57684"/>
<dbReference type="KEGG" id="hsa:57684"/>
<dbReference type="MANE-Select" id="ENST00000373656.4">
    <property type="protein sequence ID" value="ENSP00000362760.3"/>
    <property type="RefSeq nucleotide sequence ID" value="NM_020924.4"/>
    <property type="RefSeq protein sequence ID" value="NP_065975.1"/>
</dbReference>
<dbReference type="UCSC" id="uc004bnj.4">
    <property type="organism name" value="human"/>
</dbReference>
<dbReference type="AGR" id="HGNC:23383"/>
<dbReference type="CTD" id="57684"/>
<dbReference type="DisGeNET" id="57684"/>
<dbReference type="GeneCards" id="ZBTB26"/>
<dbReference type="HGNC" id="HGNC:23383">
    <property type="gene designation" value="ZBTB26"/>
</dbReference>
<dbReference type="HPA" id="ENSG00000171448">
    <property type="expression patterns" value="Low tissue specificity"/>
</dbReference>
<dbReference type="MIM" id="620164">
    <property type="type" value="gene"/>
</dbReference>
<dbReference type="neXtProt" id="NX_Q9HCK0"/>
<dbReference type="OpenTargets" id="ENSG00000171448"/>
<dbReference type="PharmGKB" id="PA134914020"/>
<dbReference type="VEuPathDB" id="HostDB:ENSG00000171448"/>
<dbReference type="eggNOG" id="KOG1721">
    <property type="taxonomic scope" value="Eukaryota"/>
</dbReference>
<dbReference type="GeneTree" id="ENSGT00940000157920"/>
<dbReference type="HOGENOM" id="CLU_037856_1_0_1"/>
<dbReference type="InParanoid" id="Q9HCK0"/>
<dbReference type="OMA" id="CEMVFAH"/>
<dbReference type="OrthoDB" id="1405595at2759"/>
<dbReference type="PAN-GO" id="Q9HCK0">
    <property type="GO annotations" value="4 GO annotations based on evolutionary models"/>
</dbReference>
<dbReference type="PhylomeDB" id="Q9HCK0"/>
<dbReference type="TreeFam" id="TF333162"/>
<dbReference type="PathwayCommons" id="Q9HCK0"/>
<dbReference type="SignaLink" id="Q9HCK0"/>
<dbReference type="BioGRID-ORCS" id="57684">
    <property type="hits" value="12 hits in 1210 CRISPR screens"/>
</dbReference>
<dbReference type="ChiTaRS" id="ZBTB26">
    <property type="organism name" value="human"/>
</dbReference>
<dbReference type="GenomeRNAi" id="57684"/>
<dbReference type="Pharos" id="Q9HCK0">
    <property type="development level" value="Tdark"/>
</dbReference>
<dbReference type="PRO" id="PR:Q9HCK0"/>
<dbReference type="Proteomes" id="UP000005640">
    <property type="component" value="Chromosome 9"/>
</dbReference>
<dbReference type="RNAct" id="Q9HCK0">
    <property type="molecule type" value="protein"/>
</dbReference>
<dbReference type="Bgee" id="ENSG00000171448">
    <property type="expression patterns" value="Expressed in sperm and 173 other cell types or tissues"/>
</dbReference>
<dbReference type="GO" id="GO:0005654">
    <property type="term" value="C:nucleoplasm"/>
    <property type="evidence" value="ECO:0000318"/>
    <property type="project" value="GO_Central"/>
</dbReference>
<dbReference type="GO" id="GO:0001227">
    <property type="term" value="F:DNA-binding transcription repressor activity, RNA polymerase II-specific"/>
    <property type="evidence" value="ECO:0000318"/>
    <property type="project" value="GO_Central"/>
</dbReference>
<dbReference type="GO" id="GO:0042802">
    <property type="term" value="F:identical protein binding"/>
    <property type="evidence" value="ECO:0000353"/>
    <property type="project" value="IntAct"/>
</dbReference>
<dbReference type="GO" id="GO:0000978">
    <property type="term" value="F:RNA polymerase II cis-regulatory region sequence-specific DNA binding"/>
    <property type="evidence" value="ECO:0000318"/>
    <property type="project" value="GO_Central"/>
</dbReference>
<dbReference type="GO" id="GO:1990837">
    <property type="term" value="F:sequence-specific double-stranded DNA binding"/>
    <property type="evidence" value="ECO:0000314"/>
    <property type="project" value="ARUK-UCL"/>
</dbReference>
<dbReference type="GO" id="GO:0008270">
    <property type="term" value="F:zinc ion binding"/>
    <property type="evidence" value="ECO:0007669"/>
    <property type="project" value="UniProtKB-KW"/>
</dbReference>
<dbReference type="GO" id="GO:0000122">
    <property type="term" value="P:negative regulation of transcription by RNA polymerase II"/>
    <property type="evidence" value="ECO:0000318"/>
    <property type="project" value="GO_Central"/>
</dbReference>
<dbReference type="GO" id="GO:0001817">
    <property type="term" value="P:regulation of cytokine production"/>
    <property type="evidence" value="ECO:0000318"/>
    <property type="project" value="GO_Central"/>
</dbReference>
<dbReference type="GO" id="GO:0002682">
    <property type="term" value="P:regulation of immune system process"/>
    <property type="evidence" value="ECO:0000318"/>
    <property type="project" value="GO_Central"/>
</dbReference>
<dbReference type="CDD" id="cd18214">
    <property type="entry name" value="BTB_POZ_ZBTB26_Bioref"/>
    <property type="match status" value="1"/>
</dbReference>
<dbReference type="FunFam" id="3.30.160.60:FF:000065">
    <property type="entry name" value="B-cell CLL/lymphoma 6, member B"/>
    <property type="match status" value="1"/>
</dbReference>
<dbReference type="FunFam" id="3.30.160.60:FF:000333">
    <property type="entry name" value="Zinc finger and BTB domain-containing protein 26"/>
    <property type="match status" value="1"/>
</dbReference>
<dbReference type="FunFam" id="3.30.160.60:FF:000542">
    <property type="entry name" value="Zinc finger and BTB domain-containing protein 26"/>
    <property type="match status" value="1"/>
</dbReference>
<dbReference type="FunFam" id="3.30.710.10:FF:000047">
    <property type="entry name" value="Zinc finger and BTB domain-containing protein 26"/>
    <property type="match status" value="1"/>
</dbReference>
<dbReference type="Gene3D" id="3.30.160.60">
    <property type="entry name" value="Classic Zinc Finger"/>
    <property type="match status" value="3"/>
</dbReference>
<dbReference type="Gene3D" id="3.30.710.10">
    <property type="entry name" value="Potassium Channel Kv1.1, Chain A"/>
    <property type="match status" value="1"/>
</dbReference>
<dbReference type="InterPro" id="IPR000210">
    <property type="entry name" value="BTB/POZ_dom"/>
</dbReference>
<dbReference type="InterPro" id="IPR011333">
    <property type="entry name" value="SKP1/BTB/POZ_sf"/>
</dbReference>
<dbReference type="InterPro" id="IPR036236">
    <property type="entry name" value="Znf_C2H2_sf"/>
</dbReference>
<dbReference type="InterPro" id="IPR013087">
    <property type="entry name" value="Znf_C2H2_type"/>
</dbReference>
<dbReference type="InterPro" id="IPR050457">
    <property type="entry name" value="ZnFinger_BTB_dom_contain"/>
</dbReference>
<dbReference type="PANTHER" id="PTHR46105">
    <property type="entry name" value="AGAP004733-PA"/>
    <property type="match status" value="1"/>
</dbReference>
<dbReference type="PANTHER" id="PTHR46105:SF29">
    <property type="entry name" value="ZINC FINGER AND BTB DOMAIN CONTAINING 12"/>
    <property type="match status" value="1"/>
</dbReference>
<dbReference type="Pfam" id="PF00651">
    <property type="entry name" value="BTB"/>
    <property type="match status" value="1"/>
</dbReference>
<dbReference type="Pfam" id="PF00096">
    <property type="entry name" value="zf-C2H2"/>
    <property type="match status" value="4"/>
</dbReference>
<dbReference type="SMART" id="SM00225">
    <property type="entry name" value="BTB"/>
    <property type="match status" value="1"/>
</dbReference>
<dbReference type="SMART" id="SM00355">
    <property type="entry name" value="ZnF_C2H2"/>
    <property type="match status" value="4"/>
</dbReference>
<dbReference type="SUPFAM" id="SSF57667">
    <property type="entry name" value="beta-beta-alpha zinc fingers"/>
    <property type="match status" value="2"/>
</dbReference>
<dbReference type="SUPFAM" id="SSF54695">
    <property type="entry name" value="POZ domain"/>
    <property type="match status" value="1"/>
</dbReference>
<dbReference type="PROSITE" id="PS50097">
    <property type="entry name" value="BTB"/>
    <property type="match status" value="1"/>
</dbReference>
<dbReference type="PROSITE" id="PS00028">
    <property type="entry name" value="ZINC_FINGER_C2H2_1"/>
    <property type="match status" value="4"/>
</dbReference>
<dbReference type="PROSITE" id="PS50157">
    <property type="entry name" value="ZINC_FINGER_C2H2_2"/>
    <property type="match status" value="4"/>
</dbReference>
<protein>
    <recommendedName>
        <fullName>Zinc finger and BTB domain-containing protein 26</fullName>
    </recommendedName>
    <alternativeName>
        <fullName>Zinc finger protein 481</fullName>
    </alternativeName>
    <alternativeName>
        <fullName>Zinc finger protein Bioref</fullName>
    </alternativeName>
</protein>
<gene>
    <name type="primary">ZBTB26</name>
    <name type="synonym">KIAA1572</name>
    <name type="synonym">ZNF481</name>
</gene>
<name>ZBT26_HUMAN</name>
<keyword id="KW-0238">DNA-binding</keyword>
<keyword id="KW-1017">Isopeptide bond</keyword>
<keyword id="KW-0479">Metal-binding</keyword>
<keyword id="KW-0539">Nucleus</keyword>
<keyword id="KW-1267">Proteomics identification</keyword>
<keyword id="KW-1185">Reference proteome</keyword>
<keyword id="KW-0677">Repeat</keyword>
<keyword id="KW-0804">Transcription</keyword>
<keyword id="KW-0805">Transcription regulation</keyword>
<keyword id="KW-0832">Ubl conjugation</keyword>
<keyword id="KW-0862">Zinc</keyword>
<keyword id="KW-0863">Zinc-finger</keyword>